<reference key="1">
    <citation type="journal article" date="2000" name="Arch. Virol.">
        <title>Indian citrus ringspot virus: a proposed new species with some affinities to potex-, carla-, fovea- and allexiviruses.</title>
        <authorList>
            <person name="Rustici G."/>
            <person name="Accotto G.P."/>
            <person name="Noris E."/>
            <person name="Masenga V."/>
            <person name="Luisoni E."/>
            <person name="Milne R.G."/>
        </authorList>
    </citation>
    <scope>NUCLEOTIDE SEQUENCE [GENOMIC RNA]</scope>
</reference>
<reference key="2">
    <citation type="journal article" date="2002" name="Arch. Virol.">
        <title>Nucleotide sequence, genome organisation and phylogenetic analysis of Indian citrus ringspot virus.</title>
        <authorList>
            <person name="Rustici G."/>
            <person name="Milne R.G."/>
            <person name="Accotto G.P."/>
        </authorList>
    </citation>
    <scope>NUCLEOTIDE SEQUENCE [GENOMIC RNA]</scope>
</reference>
<sequence>MATIRGAIDRITDTTVRTTLQEEACRQIRTELKNVEHVNRYAIPPDAADALEHLGIGTNPFSVKLHTHGACKAIENQLLYVVGTLLPKERVTMLFLKKAKLNFMKRCPKFQDIFLNQHIEPRDVSRYCDFNVQSTSTSIPTHTAYISDTLHFMDRKDLVRLFINSPNLDTLYATIVLPVEAAYRQPSRYPDLYQINYDFDGFQYIPGGHGGGAYHHEFSHLEWLDVGHIHWRGPDNKDIQLTITAQMIESLGANHLFCFRRGNLRTPRVRTFGRDTQVLLPKIFRPVDKNFNRAIPLTLANKMLLYAKSINTVTFRDVVAKTRQLMKDKELETYTGADLLHMANYFFVVGALSGVNSYDQMLGLSAWEACTMALKNTVTNLWERITGKREFGKLLEALEWETLTYSRQVTQKYVGGTPARLPLPDITDQEEIFAQQEALDALTSGATKITTHHLMSAAARRSTEGPTMPTPAAQVPPTQNPKHTIDEVASRALVTKLQKNKRVYIQDDGPEYIMGHMAEVPAWYLEQDETTTRLRNRCAWFFGPPTHRYGHNDIEYHTTEYYPWVERIGNIFGKFNTCLAQTHDQGARIGYHADDEDCYDKDVTVATVNLTGNATFSLKTATGTRTWKLKPGDFIVLKPGAQGCTKHAISDCTTNRTSLTFRWQARPCPSQLRRVVNLGNVNNPKRKSKAQQWTPKTSNSDSPRLTQTPNSPTPKDVPVVSPKLADATAPTIRAVPENGAHTNMACVELTDLPETTTTHRPGKEPINDLTDSEPETESEQTENLVLNRFIQDLPTTSTHAWASETDSICSFQAEALGPSSVEALPWHEHLELINSLGFTGLERQYGPDNNLIWPITHYRTLPKSRTIEAPTDLVELLDTIDRHPTDVPYSKTRASAFGSDVKNLRIGALVKNQDKQWRASLALLCEENEHVLPTTVIHGAGGSGKSHLLQQWVSSTERGNVVVILPTIELLRDWLNKCPTTPKDSFKTFEKALVQNSAPVVIMDDYSKLPPGYIEAYVALKGQCKLLVLTGDPRQSHYHEENPEALISTLDPATDYFSKYCTYNINATHRNATTFANALGVYSERKLPVSVTCSSYQKSGWPTLVPSILKKTALNDMGQRSLTYAGCQGLTTPKVQIVLDNATPLCSEQVMYTALSRAVDQIHFFNTGPNHSDYWEKMNATPFLKTFIDHTREENLKEHQPAEPTVREHTPATHFPPANEALALEPWVEPLTDKHSRELHHKALGHSNCVQTDNPVVQLFPHQQAKDETLFWKTIDARIKITTPEENVRNFNMASDIGDILFLNYKEAMCLPADPIPFQQSLWDSCQAEVQQTYLSKPLAALANAAQRQDPDFDSNKIQLFLKSQWVKKVEKLGCLKIKPGQTIASFMQQTVMLYGTMARYMRRIRISLCPSHIMINCETNPTQISSWVRENWDFSGQSHENDFEAFDQSQDANMLQFELIKAKFHSIPEEIIAGYKHLKCHAHIFLGTIAIMRLSGEGPTFDANTECSIAYNHTRYFVPKGCAQLYAGDDSACAAPLSEKPSFQHISPELSLKSKAKIRSQTKGDYATFCGWLITPKGFIKNPTQLYASWLLAKHNKDLQDVARNYALDLRIAYQLKDELYELLSPEELDHHQLLVREMVKHKMGHLLNLPEGFKQT</sequence>
<dbReference type="EC" id="2.7.7.48"/>
<dbReference type="EC" id="3.6.4.13"/>
<dbReference type="EMBL" id="AF406744">
    <property type="protein sequence ID" value="AAK97522.1"/>
    <property type="molecule type" value="Genomic_RNA"/>
</dbReference>
<dbReference type="RefSeq" id="NP_203553.1">
    <property type="nucleotide sequence ID" value="NC_003093.1"/>
</dbReference>
<dbReference type="KEGG" id="vg:922105"/>
<dbReference type="Proteomes" id="UP000000394">
    <property type="component" value="Segment"/>
</dbReference>
<dbReference type="GO" id="GO:0005524">
    <property type="term" value="F:ATP binding"/>
    <property type="evidence" value="ECO:0007669"/>
    <property type="project" value="UniProtKB-KW"/>
</dbReference>
<dbReference type="GO" id="GO:0016887">
    <property type="term" value="F:ATP hydrolysis activity"/>
    <property type="evidence" value="ECO:0007669"/>
    <property type="project" value="RHEA"/>
</dbReference>
<dbReference type="GO" id="GO:0051213">
    <property type="term" value="F:dioxygenase activity"/>
    <property type="evidence" value="ECO:0007669"/>
    <property type="project" value="UniProtKB-KW"/>
</dbReference>
<dbReference type="GO" id="GO:0046872">
    <property type="term" value="F:metal ion binding"/>
    <property type="evidence" value="ECO:0007669"/>
    <property type="project" value="UniProtKB-KW"/>
</dbReference>
<dbReference type="GO" id="GO:0008174">
    <property type="term" value="F:mRNA methyltransferase activity"/>
    <property type="evidence" value="ECO:0007669"/>
    <property type="project" value="InterPro"/>
</dbReference>
<dbReference type="GO" id="GO:0003723">
    <property type="term" value="F:RNA binding"/>
    <property type="evidence" value="ECO:0007669"/>
    <property type="project" value="InterPro"/>
</dbReference>
<dbReference type="GO" id="GO:0003724">
    <property type="term" value="F:RNA helicase activity"/>
    <property type="evidence" value="ECO:0007669"/>
    <property type="project" value="UniProtKB-EC"/>
</dbReference>
<dbReference type="GO" id="GO:0003968">
    <property type="term" value="F:RNA-directed RNA polymerase activity"/>
    <property type="evidence" value="ECO:0007669"/>
    <property type="project" value="UniProtKB-KW"/>
</dbReference>
<dbReference type="GO" id="GO:0006351">
    <property type="term" value="P:DNA-templated transcription"/>
    <property type="evidence" value="ECO:0007669"/>
    <property type="project" value="InterPro"/>
</dbReference>
<dbReference type="GO" id="GO:0016556">
    <property type="term" value="P:mRNA modification"/>
    <property type="evidence" value="ECO:0007669"/>
    <property type="project" value="InterPro"/>
</dbReference>
<dbReference type="GO" id="GO:0006396">
    <property type="term" value="P:RNA processing"/>
    <property type="evidence" value="ECO:0007669"/>
    <property type="project" value="InterPro"/>
</dbReference>
<dbReference type="GO" id="GO:0039694">
    <property type="term" value="P:viral RNA genome replication"/>
    <property type="evidence" value="ECO:0007669"/>
    <property type="project" value="InterPro"/>
</dbReference>
<dbReference type="CDD" id="cd23246">
    <property type="entry name" value="Alphaflexiviridae_RdRp"/>
    <property type="match status" value="1"/>
</dbReference>
<dbReference type="Gene3D" id="2.60.120.590">
    <property type="entry name" value="Alpha-ketoglutarate-dependent dioxygenase AlkB-like"/>
    <property type="match status" value="1"/>
</dbReference>
<dbReference type="Gene3D" id="3.40.50.300">
    <property type="entry name" value="P-loop containing nucleotide triphosphate hydrolases"/>
    <property type="match status" value="1"/>
</dbReference>
<dbReference type="InterPro" id="IPR027351">
    <property type="entry name" value="(+)RNA_virus_helicase_core_dom"/>
</dbReference>
<dbReference type="InterPro" id="IPR027450">
    <property type="entry name" value="AlkB-like"/>
</dbReference>
<dbReference type="InterPro" id="IPR037151">
    <property type="entry name" value="AlkB-like_sf"/>
</dbReference>
<dbReference type="InterPro" id="IPR002588">
    <property type="entry name" value="Alphavirus-like_MT_dom"/>
</dbReference>
<dbReference type="InterPro" id="IPR043502">
    <property type="entry name" value="DNA/RNA_pol_sf"/>
</dbReference>
<dbReference type="InterPro" id="IPR005123">
    <property type="entry name" value="Oxoglu/Fe-dep_dioxygenase_dom"/>
</dbReference>
<dbReference type="InterPro" id="IPR027417">
    <property type="entry name" value="P-loop_NTPase"/>
</dbReference>
<dbReference type="InterPro" id="IPR001788">
    <property type="entry name" value="RNA-dep_RNA_pol_alsuvir"/>
</dbReference>
<dbReference type="InterPro" id="IPR007094">
    <property type="entry name" value="RNA-dir_pol_PSvirus"/>
</dbReference>
<dbReference type="Pfam" id="PF13532">
    <property type="entry name" value="2OG-FeII_Oxy_2"/>
    <property type="match status" value="1"/>
</dbReference>
<dbReference type="Pfam" id="PF00978">
    <property type="entry name" value="RdRP_2"/>
    <property type="match status" value="1"/>
</dbReference>
<dbReference type="Pfam" id="PF01443">
    <property type="entry name" value="Viral_helicase1"/>
    <property type="match status" value="1"/>
</dbReference>
<dbReference type="Pfam" id="PF01660">
    <property type="entry name" value="Vmethyltransf"/>
    <property type="match status" value="1"/>
</dbReference>
<dbReference type="SUPFAM" id="SSF51197">
    <property type="entry name" value="Clavaminate synthase-like"/>
    <property type="match status" value="1"/>
</dbReference>
<dbReference type="SUPFAM" id="SSF56672">
    <property type="entry name" value="DNA/RNA polymerases"/>
    <property type="match status" value="1"/>
</dbReference>
<dbReference type="SUPFAM" id="SSF52540">
    <property type="entry name" value="P-loop containing nucleoside triphosphate hydrolases"/>
    <property type="match status" value="2"/>
</dbReference>
<dbReference type="PROSITE" id="PS51743">
    <property type="entry name" value="ALPHAVIRUS_MT"/>
    <property type="match status" value="1"/>
</dbReference>
<dbReference type="PROSITE" id="PS51471">
    <property type="entry name" value="FE2OG_OXY"/>
    <property type="match status" value="1"/>
</dbReference>
<dbReference type="PROSITE" id="PS51657">
    <property type="entry name" value="PSRV_HELICASE"/>
    <property type="match status" value="1"/>
</dbReference>
<dbReference type="PROSITE" id="PS50507">
    <property type="entry name" value="RDRP_SSRNA_POS"/>
    <property type="match status" value="1"/>
</dbReference>
<organism>
    <name type="scientific">Indian citrus ringspot virus (isolate Kinnow mandarin/India/K1/1996)</name>
    <name type="common">ICRSV</name>
    <dbReference type="NCBI Taxonomy" id="651357"/>
    <lineage>
        <taxon>Viruses</taxon>
        <taxon>Riboviria</taxon>
        <taxon>Orthornavirae</taxon>
        <taxon>Kitrinoviricota</taxon>
        <taxon>Alsuviricetes</taxon>
        <taxon>Tymovirales</taxon>
        <taxon>Alphaflexiviridae</taxon>
        <taxon>Potexvirus</taxon>
        <taxon>Mandarivirus</taxon>
        <taxon>Indian citrus ringspot virus</taxon>
    </lineage>
</organism>
<name>RDRP_ICRSV</name>
<protein>
    <recommendedName>
        <fullName>RNA replication protein</fullName>
    </recommendedName>
    <domain>
        <recommendedName>
            <fullName>RNA-directed RNA polymerase</fullName>
            <ecNumber>2.7.7.48</ecNumber>
        </recommendedName>
    </domain>
    <domain>
        <recommendedName>
            <fullName>Helicase</fullName>
            <ecNumber>3.6.4.13</ecNumber>
        </recommendedName>
    </domain>
</protein>
<comment type="function">
    <text evidence="5">RNA replication. The central part of this protein possibly functions as an ATP-binding helicase (Probable).</text>
</comment>
<comment type="catalytic activity">
    <reaction evidence="1">
        <text>RNA(n) + a ribonucleoside 5'-triphosphate = RNA(n+1) + diphosphate</text>
        <dbReference type="Rhea" id="RHEA:21248"/>
        <dbReference type="Rhea" id="RHEA-COMP:14527"/>
        <dbReference type="Rhea" id="RHEA-COMP:17342"/>
        <dbReference type="ChEBI" id="CHEBI:33019"/>
        <dbReference type="ChEBI" id="CHEBI:61557"/>
        <dbReference type="ChEBI" id="CHEBI:140395"/>
        <dbReference type="EC" id="2.7.7.48"/>
    </reaction>
</comment>
<comment type="catalytic activity">
    <reaction>
        <text>ATP + H2O = ADP + phosphate + H(+)</text>
        <dbReference type="Rhea" id="RHEA:13065"/>
        <dbReference type="ChEBI" id="CHEBI:15377"/>
        <dbReference type="ChEBI" id="CHEBI:15378"/>
        <dbReference type="ChEBI" id="CHEBI:30616"/>
        <dbReference type="ChEBI" id="CHEBI:43474"/>
        <dbReference type="ChEBI" id="CHEBI:456216"/>
        <dbReference type="EC" id="3.6.4.13"/>
    </reaction>
</comment>
<comment type="cofactor">
    <cofactor evidence="2">
        <name>Fe(2+)</name>
        <dbReference type="ChEBI" id="CHEBI:29033"/>
    </cofactor>
    <text evidence="2">Binds 1 Fe(2+) ion per subunit.</text>
</comment>
<comment type="similarity">
    <text evidence="5">Belongs to the potexvirus/carlavirus RNA replication protein family.</text>
</comment>
<evidence type="ECO:0000255" key="1">
    <source>
        <dbReference type="PROSITE-ProRule" id="PRU00539"/>
    </source>
</evidence>
<evidence type="ECO:0000255" key="2">
    <source>
        <dbReference type="PROSITE-ProRule" id="PRU00805"/>
    </source>
</evidence>
<evidence type="ECO:0000255" key="3">
    <source>
        <dbReference type="PROSITE-ProRule" id="PRU01079"/>
    </source>
</evidence>
<evidence type="ECO:0000256" key="4">
    <source>
        <dbReference type="SAM" id="MobiDB-lite"/>
    </source>
</evidence>
<evidence type="ECO:0000305" key="5"/>
<accession>Q918W3</accession>
<feature type="chain" id="PRO_0000401078" description="RNA replication protein">
    <location>
        <begin position="1"/>
        <end position="1658"/>
    </location>
</feature>
<feature type="domain" description="Alphavirus-like MT" evidence="3">
    <location>
        <begin position="59"/>
        <end position="224"/>
    </location>
</feature>
<feature type="domain" description="Fe2OG dioxygenase" evidence="2">
    <location>
        <begin position="574"/>
        <end position="665"/>
    </location>
</feature>
<feature type="domain" description="(+)RNA virus helicase ATP-binding">
    <location>
        <begin position="910"/>
        <end position="1065"/>
    </location>
</feature>
<feature type="domain" description="(+)RNA virus helicase C-terminal">
    <location>
        <begin position="1066"/>
        <end position="1199"/>
    </location>
</feature>
<feature type="domain" description="RdRp catalytic" evidence="1">
    <location>
        <begin position="1437"/>
        <end position="1544"/>
    </location>
</feature>
<feature type="region of interest" description="Disordered" evidence="4">
    <location>
        <begin position="462"/>
        <end position="481"/>
    </location>
</feature>
<feature type="region of interest" description="Disordered" evidence="4">
    <location>
        <begin position="676"/>
        <end position="721"/>
    </location>
</feature>
<feature type="region of interest" description="Disordered" evidence="4">
    <location>
        <begin position="754"/>
        <end position="776"/>
    </location>
</feature>
<feature type="compositionally biased region" description="Polar residues" evidence="4">
    <location>
        <begin position="690"/>
        <end position="710"/>
    </location>
</feature>
<feature type="binding site" evidence="2">
    <location>
        <position position="592"/>
    </location>
    <ligand>
        <name>Fe cation</name>
        <dbReference type="ChEBI" id="CHEBI:24875"/>
    </ligand>
</feature>
<feature type="binding site" evidence="2">
    <location>
        <position position="594"/>
    </location>
    <ligand>
        <name>Fe cation</name>
        <dbReference type="ChEBI" id="CHEBI:24875"/>
    </ligand>
</feature>
<feature type="binding site" evidence="2">
    <location>
        <position position="647"/>
    </location>
    <ligand>
        <name>Fe cation</name>
        <dbReference type="ChEBI" id="CHEBI:24875"/>
    </ligand>
</feature>
<feature type="binding site" evidence="2">
    <location>
        <position position="656"/>
    </location>
    <ligand>
        <name>2-oxoglutarate</name>
        <dbReference type="ChEBI" id="CHEBI:16810"/>
    </ligand>
</feature>
<keyword id="KW-0067">ATP-binding</keyword>
<keyword id="KW-0223">Dioxygenase</keyword>
<keyword id="KW-0347">Helicase</keyword>
<keyword id="KW-0378">Hydrolase</keyword>
<keyword id="KW-0408">Iron</keyword>
<keyword id="KW-0479">Metal-binding</keyword>
<keyword id="KW-0511">Multifunctional enzyme</keyword>
<keyword id="KW-0547">Nucleotide-binding</keyword>
<keyword id="KW-0548">Nucleotidyltransferase</keyword>
<keyword id="KW-0560">Oxidoreductase</keyword>
<keyword id="KW-1185">Reference proteome</keyword>
<keyword id="KW-0696">RNA-directed RNA polymerase</keyword>
<keyword id="KW-0808">Transferase</keyword>
<keyword id="KW-0693">Viral RNA replication</keyword>
<gene>
    <name type="ORF">ORF1</name>
</gene>
<proteinExistence type="inferred from homology"/>
<organismHost>
    <name type="scientific">Citrus</name>
    <dbReference type="NCBI Taxonomy" id="2706"/>
</organismHost>